<organism>
    <name type="scientific">Bacillus subtilis (strain 168)</name>
    <dbReference type="NCBI Taxonomy" id="224308"/>
    <lineage>
        <taxon>Bacteria</taxon>
        <taxon>Bacillati</taxon>
        <taxon>Bacillota</taxon>
        <taxon>Bacilli</taxon>
        <taxon>Bacillales</taxon>
        <taxon>Bacillaceae</taxon>
        <taxon>Bacillus</taxon>
    </lineage>
</organism>
<accession>O34928</accession>
<dbReference type="EC" id="3.5.1.-"/>
<dbReference type="EMBL" id="D83967">
    <property type="protein sequence ID" value="BAA23389.1"/>
    <property type="molecule type" value="Genomic_DNA"/>
</dbReference>
<dbReference type="EMBL" id="AL009126">
    <property type="protein sequence ID" value="CAB12627.1"/>
    <property type="molecule type" value="Genomic_DNA"/>
</dbReference>
<dbReference type="PIR" id="B69807">
    <property type="entry name" value="B69807"/>
</dbReference>
<dbReference type="RefSeq" id="NP_388679.1">
    <property type="nucleotide sequence ID" value="NC_000964.3"/>
</dbReference>
<dbReference type="RefSeq" id="WP_003244439.1">
    <property type="nucleotide sequence ID" value="NZ_OZ025638.1"/>
</dbReference>
<dbReference type="PDB" id="1NY1">
    <property type="method" value="X-ray"/>
    <property type="resolution" value="1.80 A"/>
    <property type="chains" value="A/B=24-263"/>
</dbReference>
<dbReference type="PDB" id="1W17">
    <property type="method" value="X-ray"/>
    <property type="resolution" value="1.90 A"/>
    <property type="chains" value="A/B=1-263"/>
</dbReference>
<dbReference type="PDB" id="1W1A">
    <property type="method" value="X-ray"/>
    <property type="resolution" value="2.25 A"/>
    <property type="chains" value="1/2=12-263"/>
</dbReference>
<dbReference type="PDB" id="1W1B">
    <property type="method" value="X-ray"/>
    <property type="resolution" value="2.10 A"/>
    <property type="chains" value="1/2=12-263"/>
</dbReference>
<dbReference type="PDBsum" id="1NY1"/>
<dbReference type="PDBsum" id="1W17"/>
<dbReference type="PDBsum" id="1W1A"/>
<dbReference type="PDBsum" id="1W1B"/>
<dbReference type="SMR" id="O34928"/>
<dbReference type="FunCoup" id="O34928">
    <property type="interactions" value="107"/>
</dbReference>
<dbReference type="STRING" id="224308.BSU07980"/>
<dbReference type="DrugBank" id="DB03740">
    <property type="generic name" value="N-acetyl-alpha-D-glucosamine"/>
</dbReference>
<dbReference type="PaxDb" id="224308-BSU07980"/>
<dbReference type="EnsemblBacteria" id="CAB12627">
    <property type="protein sequence ID" value="CAB12627"/>
    <property type="gene ID" value="BSU_07980"/>
</dbReference>
<dbReference type="GeneID" id="936136"/>
<dbReference type="KEGG" id="bsu:BSU07980"/>
<dbReference type="PATRIC" id="fig|224308.179.peg.863"/>
<dbReference type="eggNOG" id="COG0726">
    <property type="taxonomic scope" value="Bacteria"/>
</dbReference>
<dbReference type="InParanoid" id="O34928"/>
<dbReference type="OrthoDB" id="9812065at2"/>
<dbReference type="PhylomeDB" id="O34928"/>
<dbReference type="BioCyc" id="BSUB:BSU07980-MONOMER"/>
<dbReference type="BioCyc" id="MetaCyc:BSU07980-MONOMER"/>
<dbReference type="EvolutionaryTrace" id="O34928"/>
<dbReference type="Proteomes" id="UP000001570">
    <property type="component" value="Chromosome"/>
</dbReference>
<dbReference type="GO" id="GO:0019213">
    <property type="term" value="F:deacetylase activity"/>
    <property type="evidence" value="ECO:0000314"/>
    <property type="project" value="CACAO"/>
</dbReference>
<dbReference type="GO" id="GO:0016810">
    <property type="term" value="F:hydrolase activity, acting on carbon-nitrogen (but not peptide) bonds"/>
    <property type="evidence" value="ECO:0007669"/>
    <property type="project" value="InterPro"/>
</dbReference>
<dbReference type="GO" id="GO:0046872">
    <property type="term" value="F:metal ion binding"/>
    <property type="evidence" value="ECO:0007669"/>
    <property type="project" value="UniProtKB-KW"/>
</dbReference>
<dbReference type="GO" id="GO:0005975">
    <property type="term" value="P:carbohydrate metabolic process"/>
    <property type="evidence" value="ECO:0007669"/>
    <property type="project" value="InterPro"/>
</dbReference>
<dbReference type="GO" id="GO:0071555">
    <property type="term" value="P:cell wall organization"/>
    <property type="evidence" value="ECO:0007669"/>
    <property type="project" value="UniProtKB-KW"/>
</dbReference>
<dbReference type="GO" id="GO:0030435">
    <property type="term" value="P:sporulation resulting in formation of a cellular spore"/>
    <property type="evidence" value="ECO:0007669"/>
    <property type="project" value="UniProtKB-KW"/>
</dbReference>
<dbReference type="CDD" id="cd10948">
    <property type="entry name" value="CE4_BsPdaA_like"/>
    <property type="match status" value="1"/>
</dbReference>
<dbReference type="Gene3D" id="3.20.20.370">
    <property type="entry name" value="Glycoside hydrolase/deacetylase"/>
    <property type="match status" value="1"/>
</dbReference>
<dbReference type="InterPro" id="IPR011330">
    <property type="entry name" value="Glyco_hydro/deAcase_b/a-brl"/>
</dbReference>
<dbReference type="InterPro" id="IPR002509">
    <property type="entry name" value="NODB_dom"/>
</dbReference>
<dbReference type="InterPro" id="IPR050248">
    <property type="entry name" value="Polysacc_deacetylase_ArnD"/>
</dbReference>
<dbReference type="InterPro" id="IPR014235">
    <property type="entry name" value="Spore_PdaA"/>
</dbReference>
<dbReference type="NCBIfam" id="TIGR02884">
    <property type="entry name" value="spore_pdaA"/>
    <property type="match status" value="1"/>
</dbReference>
<dbReference type="PANTHER" id="PTHR10587">
    <property type="entry name" value="GLYCOSYL TRANSFERASE-RELATED"/>
    <property type="match status" value="1"/>
</dbReference>
<dbReference type="PANTHER" id="PTHR10587:SF78">
    <property type="entry name" value="PEPTIDOGLYCAN-N-ACETYLMURAMIC ACID DEACETYLASE PDAA"/>
    <property type="match status" value="1"/>
</dbReference>
<dbReference type="Pfam" id="PF01522">
    <property type="entry name" value="Polysacc_deac_1"/>
    <property type="match status" value="1"/>
</dbReference>
<dbReference type="SUPFAM" id="SSF88713">
    <property type="entry name" value="Glycoside hydrolase/deacetylase"/>
    <property type="match status" value="1"/>
</dbReference>
<dbReference type="PROSITE" id="PS51677">
    <property type="entry name" value="NODB"/>
    <property type="match status" value="1"/>
</dbReference>
<name>PDAA_BACSU</name>
<gene>
    <name type="primary">pdaA</name>
    <name type="synonym">yfjS</name>
    <name type="ordered locus">BSU07980</name>
</gene>
<comment type="function">
    <text evidence="4 5 6">Catalyzes the deacetylation of N-acetylmuramic acid (MurNAc) residues in glycan strands of peptidoglycan, leading to the formation of muramic delta-lactam residues in spore cortex, after transpeptidation of deacetylated muramic acid residues. PdaA probably carries out both deacetylation and lactam ring formation and requires the product of CwlD activity on peptidoglycan as a substrate. Is required for germination. Cannot use chitin oligomer (hexa-N-acetylchitohexaose) as a substrate.</text>
</comment>
<comment type="biophysicochemical properties">
    <phDependence>
        <text evidence="6">Optimum pH is 7.0.</text>
    </phDependence>
</comment>
<comment type="developmental stage">
    <text evidence="4">Expressed in the forespore, then exported into the developing cortex.</text>
</comment>
<comment type="induction">
    <text evidence="4">Expression is sigma G-dependent.</text>
</comment>
<comment type="disruption phenotype">
    <text evidence="4 5">Spores have no muramic delta-lactam structure in the cortex and cannot germinate. Mutant spore peptidoglycan possesses many MurNAc residues lacking peptide side chains.</text>
</comment>
<comment type="miscellaneous">
    <text evidence="8">CwlD and PdaA are necessary and sufficient for muramic delta-lactam production in B.subtilis spore peptidoglycan.</text>
</comment>
<comment type="similarity">
    <text evidence="7">Belongs to the polysaccharide deacetylase family.</text>
</comment>
<reference key="1">
    <citation type="journal article" date="1996" name="Microbiology">
        <title>Cloning and sequencing of a 40.6 kb segment in the 73 degrees-76 degrees region of the Bacillus subtilis chromosome containing genes for trehalose metabolism and acetoin utilization.</title>
        <authorList>
            <person name="Yamamoto H."/>
            <person name="Uchiyama S."/>
            <person name="Sekiguchi J."/>
        </authorList>
    </citation>
    <scope>NUCLEOTIDE SEQUENCE [GENOMIC DNA]</scope>
    <source>
        <strain>168 / AC327</strain>
    </source>
</reference>
<reference key="2">
    <citation type="journal article" date="1997" name="Nature">
        <title>The complete genome sequence of the Gram-positive bacterium Bacillus subtilis.</title>
        <authorList>
            <person name="Kunst F."/>
            <person name="Ogasawara N."/>
            <person name="Moszer I."/>
            <person name="Albertini A.M."/>
            <person name="Alloni G."/>
            <person name="Azevedo V."/>
            <person name="Bertero M.G."/>
            <person name="Bessieres P."/>
            <person name="Bolotin A."/>
            <person name="Borchert S."/>
            <person name="Borriss R."/>
            <person name="Boursier L."/>
            <person name="Brans A."/>
            <person name="Braun M."/>
            <person name="Brignell S.C."/>
            <person name="Bron S."/>
            <person name="Brouillet S."/>
            <person name="Bruschi C.V."/>
            <person name="Caldwell B."/>
            <person name="Capuano V."/>
            <person name="Carter N.M."/>
            <person name="Choi S.-K."/>
            <person name="Codani J.-J."/>
            <person name="Connerton I.F."/>
            <person name="Cummings N.J."/>
            <person name="Daniel R.A."/>
            <person name="Denizot F."/>
            <person name="Devine K.M."/>
            <person name="Duesterhoeft A."/>
            <person name="Ehrlich S.D."/>
            <person name="Emmerson P.T."/>
            <person name="Entian K.-D."/>
            <person name="Errington J."/>
            <person name="Fabret C."/>
            <person name="Ferrari E."/>
            <person name="Foulger D."/>
            <person name="Fritz C."/>
            <person name="Fujita M."/>
            <person name="Fujita Y."/>
            <person name="Fuma S."/>
            <person name="Galizzi A."/>
            <person name="Galleron N."/>
            <person name="Ghim S.-Y."/>
            <person name="Glaser P."/>
            <person name="Goffeau A."/>
            <person name="Golightly E.J."/>
            <person name="Grandi G."/>
            <person name="Guiseppi G."/>
            <person name="Guy B.J."/>
            <person name="Haga K."/>
            <person name="Haiech J."/>
            <person name="Harwood C.R."/>
            <person name="Henaut A."/>
            <person name="Hilbert H."/>
            <person name="Holsappel S."/>
            <person name="Hosono S."/>
            <person name="Hullo M.-F."/>
            <person name="Itaya M."/>
            <person name="Jones L.-M."/>
            <person name="Joris B."/>
            <person name="Karamata D."/>
            <person name="Kasahara Y."/>
            <person name="Klaerr-Blanchard M."/>
            <person name="Klein C."/>
            <person name="Kobayashi Y."/>
            <person name="Koetter P."/>
            <person name="Koningstein G."/>
            <person name="Krogh S."/>
            <person name="Kumano M."/>
            <person name="Kurita K."/>
            <person name="Lapidus A."/>
            <person name="Lardinois S."/>
            <person name="Lauber J."/>
            <person name="Lazarevic V."/>
            <person name="Lee S.-M."/>
            <person name="Levine A."/>
            <person name="Liu H."/>
            <person name="Masuda S."/>
            <person name="Mauel C."/>
            <person name="Medigue C."/>
            <person name="Medina N."/>
            <person name="Mellado R.P."/>
            <person name="Mizuno M."/>
            <person name="Moestl D."/>
            <person name="Nakai S."/>
            <person name="Noback M."/>
            <person name="Noone D."/>
            <person name="O'Reilly M."/>
            <person name="Ogawa K."/>
            <person name="Ogiwara A."/>
            <person name="Oudega B."/>
            <person name="Park S.-H."/>
            <person name="Parro V."/>
            <person name="Pohl T.M."/>
            <person name="Portetelle D."/>
            <person name="Porwollik S."/>
            <person name="Prescott A.M."/>
            <person name="Presecan E."/>
            <person name="Pujic P."/>
            <person name="Purnelle B."/>
            <person name="Rapoport G."/>
            <person name="Rey M."/>
            <person name="Reynolds S."/>
            <person name="Rieger M."/>
            <person name="Rivolta C."/>
            <person name="Rocha E."/>
            <person name="Roche B."/>
            <person name="Rose M."/>
            <person name="Sadaie Y."/>
            <person name="Sato T."/>
            <person name="Scanlan E."/>
            <person name="Schleich S."/>
            <person name="Schroeter R."/>
            <person name="Scoffone F."/>
            <person name="Sekiguchi J."/>
            <person name="Sekowska A."/>
            <person name="Seror S.J."/>
            <person name="Serror P."/>
            <person name="Shin B.-S."/>
            <person name="Soldo B."/>
            <person name="Sorokin A."/>
            <person name="Tacconi E."/>
            <person name="Takagi T."/>
            <person name="Takahashi H."/>
            <person name="Takemaru K."/>
            <person name="Takeuchi M."/>
            <person name="Tamakoshi A."/>
            <person name="Tanaka T."/>
            <person name="Terpstra P."/>
            <person name="Tognoni A."/>
            <person name="Tosato V."/>
            <person name="Uchiyama S."/>
            <person name="Vandenbol M."/>
            <person name="Vannier F."/>
            <person name="Vassarotti A."/>
            <person name="Viari A."/>
            <person name="Wambutt R."/>
            <person name="Wedler E."/>
            <person name="Wedler H."/>
            <person name="Weitzenegger T."/>
            <person name="Winters P."/>
            <person name="Wipat A."/>
            <person name="Yamamoto H."/>
            <person name="Yamane K."/>
            <person name="Yasumoto K."/>
            <person name="Yata K."/>
            <person name="Yoshida K."/>
            <person name="Yoshikawa H.-F."/>
            <person name="Zumstein E."/>
            <person name="Yoshikawa H."/>
            <person name="Danchin A."/>
        </authorList>
    </citation>
    <scope>NUCLEOTIDE SEQUENCE [LARGE SCALE GENOMIC DNA]</scope>
    <source>
        <strain>168</strain>
    </source>
</reference>
<reference key="3">
    <citation type="journal article" date="2002" name="J. Bacteriol.">
        <title>A polysaccharide deacetylase gene (pdaA) is required for germination and for production of muramic delta-lactam residues in the spore cortex of Bacillus subtilis.</title>
        <authorList>
            <person name="Fukushima T."/>
            <person name="Yamamoto H."/>
            <person name="Atrih A."/>
            <person name="Foster S.J."/>
            <person name="Sekiguchi J."/>
        </authorList>
    </citation>
    <scope>FUNCTION</scope>
    <scope>INDUCTION</scope>
    <scope>DEVELOPMENTAL STAGE</scope>
    <scope>DISRUPTION PHENOTYPE</scope>
    <source>
        <strain>168</strain>
    </source>
</reference>
<reference key="4">
    <citation type="journal article" date="2004" name="J. Bacteriol.">
        <title>Production of muramic delta-lactam in Bacillus subtilis spore peptidoglycan.</title>
        <authorList>
            <person name="Gilmore M.E."/>
            <person name="Bandyopadhyay D."/>
            <person name="Dean A.M."/>
            <person name="Linnstaedt S.D."/>
            <person name="Popham D.L."/>
        </authorList>
    </citation>
    <scope>FUNCTION</scope>
    <scope>DISRUPTION PHENOTYPE</scope>
</reference>
<reference key="5">
    <citation type="journal article" date="2005" name="J. Bacteriol.">
        <title>A polysaccharide deacetylase homologue, PdaA, in Bacillus subtilis acts as an N-acetylmuramic acid deacetylase in vitro.</title>
        <authorList>
            <person name="Fukushima T."/>
            <person name="Kitajima T."/>
            <person name="Sekiguchi J."/>
        </authorList>
    </citation>
    <scope>FUNCTION</scope>
    <scope>CATALYTIC ACTIVITY</scope>
    <scope>SUBSTRATE SPECIFICITY</scope>
    <scope>PH DEPENDENCE</scope>
    <source>
        <strain>168</strain>
        <strain>ATCC 6633 / PCI 219 / NRS 231</strain>
    </source>
</reference>
<reference key="6">
    <citation type="journal article" date="2004" name="FEBS Lett.">
        <title>Structures of Bacillus subtilis PdaA, a family 4 carbohydrate esterase, and a complex with N-acetyl-glucosamine.</title>
        <authorList>
            <person name="Blair D.E."/>
            <person name="van Aalten D.M."/>
        </authorList>
    </citation>
    <scope>X-RAY CRYSTALLOGRAPHY (1.9 ANGSTROMS) OF APOENZYME AND IN COMPLEX WITH N-ACETYLGLUCOSAMINE AND CADMIUM</scope>
</reference>
<reference key="7">
    <citation type="submission" date="2009-02" db="PDB data bank">
        <title>Crystal structure of polysaccharide deacetylase (pdaa_bacsu) from B. subtilis (pdaa_bacsu) Northeast structural genomics research consortium (NESG) target sr127.</title>
        <authorList>
            <consortium name="Northeast structural genomics consortium (NESG)"/>
        </authorList>
    </citation>
    <scope>X-RAY CRYSTALLOGRAPHY (1.8 ANGSTROMS) OF 24-263</scope>
</reference>
<keyword id="KW-0002">3D-structure</keyword>
<keyword id="KW-0961">Cell wall biogenesis/degradation</keyword>
<keyword id="KW-0378">Hydrolase</keyword>
<keyword id="KW-0479">Metal-binding</keyword>
<keyword id="KW-1185">Reference proteome</keyword>
<keyword id="KW-0732">Signal</keyword>
<keyword id="KW-0749">Sporulation</keyword>
<feature type="signal peptide" evidence="2">
    <location>
        <begin position="1"/>
        <end position="23"/>
    </location>
</feature>
<feature type="chain" id="PRO_0000024842" description="Peptidoglycan-N-acetylmuramic acid deacetylase PdaA">
    <location>
        <begin position="24"/>
        <end position="263"/>
    </location>
</feature>
<feature type="domain" description="NodB homology" evidence="3">
    <location>
        <begin position="66"/>
        <end position="247"/>
    </location>
</feature>
<feature type="active site" description="Proton acceptor" evidence="1">
    <location>
        <position position="73"/>
    </location>
</feature>
<feature type="active site" description="Proton donor" evidence="1">
    <location>
        <position position="222"/>
    </location>
</feature>
<feature type="binding site">
    <location>
        <position position="124"/>
    </location>
    <ligand>
        <name>a divalent metal cation</name>
        <dbReference type="ChEBI" id="CHEBI:60240"/>
    </ligand>
</feature>
<feature type="binding site">
    <location>
        <position position="128"/>
    </location>
    <ligand>
        <name>a divalent metal cation</name>
        <dbReference type="ChEBI" id="CHEBI:60240"/>
    </ligand>
</feature>
<feature type="site" description="Raises pKa of active site His" evidence="1">
    <location>
        <position position="193"/>
    </location>
</feature>
<feature type="helix" evidence="9">
    <location>
        <begin position="46"/>
        <end position="54"/>
    </location>
</feature>
<feature type="strand" evidence="9">
    <location>
        <begin position="58"/>
        <end position="60"/>
    </location>
</feature>
<feature type="strand" evidence="9">
    <location>
        <begin position="65"/>
        <end position="76"/>
    </location>
</feature>
<feature type="helix" evidence="9">
    <location>
        <begin position="81"/>
        <end position="90"/>
    </location>
</feature>
<feature type="strand" evidence="9">
    <location>
        <begin position="96"/>
        <end position="99"/>
    </location>
</feature>
<feature type="helix" evidence="9">
    <location>
        <begin position="101"/>
        <end position="106"/>
    </location>
</feature>
<feature type="helix" evidence="9">
    <location>
        <begin position="108"/>
        <end position="116"/>
    </location>
</feature>
<feature type="strand" evidence="9">
    <location>
        <begin position="120"/>
        <end position="123"/>
    </location>
</feature>
<feature type="helix" evidence="9">
    <location>
        <begin position="131"/>
        <end position="133"/>
    </location>
</feature>
<feature type="helix" evidence="9">
    <location>
        <begin position="136"/>
        <end position="154"/>
    </location>
</feature>
<feature type="helix" evidence="9">
    <location>
        <begin position="165"/>
        <end position="167"/>
    </location>
</feature>
<feature type="helix" evidence="9">
    <location>
        <begin position="171"/>
        <end position="179"/>
    </location>
</feature>
<feature type="strand" evidence="9">
    <location>
        <begin position="183"/>
        <end position="185"/>
    </location>
</feature>
<feature type="helix" evidence="9">
    <location>
        <begin position="196"/>
        <end position="198"/>
    </location>
</feature>
<feature type="helix" evidence="9">
    <location>
        <begin position="202"/>
        <end position="211"/>
    </location>
</feature>
<feature type="strand" evidence="9">
    <location>
        <begin position="217"/>
        <end position="221"/>
    </location>
</feature>
<feature type="helix" evidence="9">
    <location>
        <begin position="228"/>
        <end position="242"/>
    </location>
</feature>
<feature type="strand" evidence="9">
    <location>
        <begin position="245"/>
        <end position="247"/>
    </location>
</feature>
<feature type="helix" evidence="9">
    <location>
        <begin position="249"/>
        <end position="257"/>
    </location>
</feature>
<protein>
    <recommendedName>
        <fullName>Peptidoglycan-N-acetylmuramic acid deacetylase PdaA</fullName>
        <shortName>Peptidoglycan MurNAc deacetylase</shortName>
        <ecNumber>3.5.1.-</ecNumber>
    </recommendedName>
</protein>
<evidence type="ECO:0000250" key="1"/>
<evidence type="ECO:0000255" key="2"/>
<evidence type="ECO:0000255" key="3">
    <source>
        <dbReference type="PROSITE-ProRule" id="PRU01014"/>
    </source>
</evidence>
<evidence type="ECO:0000269" key="4">
    <source>
    </source>
</evidence>
<evidence type="ECO:0000269" key="5">
    <source>
    </source>
</evidence>
<evidence type="ECO:0000269" key="6">
    <source>
    </source>
</evidence>
<evidence type="ECO:0000305" key="7"/>
<evidence type="ECO:0000305" key="8">
    <source>
    </source>
</evidence>
<evidence type="ECO:0007829" key="9">
    <source>
        <dbReference type="PDB" id="1NY1"/>
    </source>
</evidence>
<proteinExistence type="evidence at protein level"/>
<sequence length="263" mass="30069">MKWMCSICCAAVLLAGGAAQAEAVPNEPINWGFKRSVNHQPPDAGKQLNSLIEKYDAFYLGNTKEKTIYLTFDNGYENGYTPKVLDVLKKHRVTGTFFVTGHFVKDQPQLIKRMSDEGHIIGNHSFHHPDLTTKTADQIQDELDSVNEEVYKITGKQDNLYLRPPRGVFSEYVLKETKRLGYQTVFWSVAFVDWKINNQKGKKYAYDHMIKQAHPGAIYLLHTVSRDNAEALDDAITDLKKQGYTFKSIDDLMFEKEMRLPSL</sequence>